<feature type="chain" id="PRO_1000017540" description="Large ribosomal subunit protein bL27">
    <location>
        <begin position="1"/>
        <end position="90"/>
    </location>
</feature>
<proteinExistence type="inferred from homology"/>
<dbReference type="EMBL" id="CP000490">
    <property type="protein sequence ID" value="ABL72168.1"/>
    <property type="molecule type" value="Genomic_DNA"/>
</dbReference>
<dbReference type="RefSeq" id="WP_011750336.1">
    <property type="nucleotide sequence ID" value="NC_008687.1"/>
</dbReference>
<dbReference type="SMR" id="A1B9H4"/>
<dbReference type="STRING" id="318586.Pden_4102"/>
<dbReference type="EnsemblBacteria" id="ABL72168">
    <property type="protein sequence ID" value="ABL72168"/>
    <property type="gene ID" value="Pden_4102"/>
</dbReference>
<dbReference type="GeneID" id="93453769"/>
<dbReference type="KEGG" id="pde:Pden_4102"/>
<dbReference type="eggNOG" id="COG0211">
    <property type="taxonomic scope" value="Bacteria"/>
</dbReference>
<dbReference type="HOGENOM" id="CLU_095424_4_1_5"/>
<dbReference type="OrthoDB" id="9803474at2"/>
<dbReference type="Proteomes" id="UP000000361">
    <property type="component" value="Chromosome 2"/>
</dbReference>
<dbReference type="GO" id="GO:0022625">
    <property type="term" value="C:cytosolic large ribosomal subunit"/>
    <property type="evidence" value="ECO:0007669"/>
    <property type="project" value="TreeGrafter"/>
</dbReference>
<dbReference type="GO" id="GO:0003735">
    <property type="term" value="F:structural constituent of ribosome"/>
    <property type="evidence" value="ECO:0007669"/>
    <property type="project" value="InterPro"/>
</dbReference>
<dbReference type="GO" id="GO:0006412">
    <property type="term" value="P:translation"/>
    <property type="evidence" value="ECO:0007669"/>
    <property type="project" value="UniProtKB-UniRule"/>
</dbReference>
<dbReference type="FunFam" id="2.40.50.100:FF:000060">
    <property type="entry name" value="Apicoplast ribosomal protein L27"/>
    <property type="match status" value="1"/>
</dbReference>
<dbReference type="Gene3D" id="2.40.50.100">
    <property type="match status" value="1"/>
</dbReference>
<dbReference type="HAMAP" id="MF_00539">
    <property type="entry name" value="Ribosomal_bL27"/>
    <property type="match status" value="1"/>
</dbReference>
<dbReference type="InterPro" id="IPR001684">
    <property type="entry name" value="Ribosomal_bL27"/>
</dbReference>
<dbReference type="InterPro" id="IPR018261">
    <property type="entry name" value="Ribosomal_bL27_CS"/>
</dbReference>
<dbReference type="NCBIfam" id="TIGR00062">
    <property type="entry name" value="L27"/>
    <property type="match status" value="1"/>
</dbReference>
<dbReference type="PANTHER" id="PTHR15893:SF0">
    <property type="entry name" value="LARGE RIBOSOMAL SUBUNIT PROTEIN BL27M"/>
    <property type="match status" value="1"/>
</dbReference>
<dbReference type="PANTHER" id="PTHR15893">
    <property type="entry name" value="RIBOSOMAL PROTEIN L27"/>
    <property type="match status" value="1"/>
</dbReference>
<dbReference type="Pfam" id="PF01016">
    <property type="entry name" value="Ribosomal_L27"/>
    <property type="match status" value="1"/>
</dbReference>
<dbReference type="PRINTS" id="PR00063">
    <property type="entry name" value="RIBOSOMALL27"/>
</dbReference>
<dbReference type="SUPFAM" id="SSF110324">
    <property type="entry name" value="Ribosomal L27 protein-like"/>
    <property type="match status" value="1"/>
</dbReference>
<dbReference type="PROSITE" id="PS00831">
    <property type="entry name" value="RIBOSOMAL_L27"/>
    <property type="match status" value="1"/>
</dbReference>
<reference key="1">
    <citation type="submission" date="2006-12" db="EMBL/GenBank/DDBJ databases">
        <title>Complete sequence of chromosome 2 of Paracoccus denitrificans PD1222.</title>
        <authorList>
            <person name="Copeland A."/>
            <person name="Lucas S."/>
            <person name="Lapidus A."/>
            <person name="Barry K."/>
            <person name="Detter J.C."/>
            <person name="Glavina del Rio T."/>
            <person name="Hammon N."/>
            <person name="Israni S."/>
            <person name="Dalin E."/>
            <person name="Tice H."/>
            <person name="Pitluck S."/>
            <person name="Munk A.C."/>
            <person name="Brettin T."/>
            <person name="Bruce D."/>
            <person name="Han C."/>
            <person name="Tapia R."/>
            <person name="Gilna P."/>
            <person name="Schmutz J."/>
            <person name="Larimer F."/>
            <person name="Land M."/>
            <person name="Hauser L."/>
            <person name="Kyrpides N."/>
            <person name="Lykidis A."/>
            <person name="Spiro S."/>
            <person name="Richardson D.J."/>
            <person name="Moir J.W.B."/>
            <person name="Ferguson S.J."/>
            <person name="van Spanning R.J.M."/>
            <person name="Richardson P."/>
        </authorList>
    </citation>
    <scope>NUCLEOTIDE SEQUENCE [LARGE SCALE GENOMIC DNA]</scope>
    <source>
        <strain>Pd 1222</strain>
    </source>
</reference>
<comment type="similarity">
    <text evidence="1">Belongs to the bacterial ribosomal protein bL27 family.</text>
</comment>
<keyword id="KW-1185">Reference proteome</keyword>
<keyword id="KW-0687">Ribonucleoprotein</keyword>
<keyword id="KW-0689">Ribosomal protein</keyword>
<protein>
    <recommendedName>
        <fullName evidence="1">Large ribosomal subunit protein bL27</fullName>
    </recommendedName>
    <alternativeName>
        <fullName evidence="2">50S ribosomal protein L27</fullName>
    </alternativeName>
</protein>
<sequence>MAHKKAGGSSRNGRDSAGRRLGVKLYGGQLAVAGNIIVRQRGTTWWPGQNVGMGRDHTLFALTDGHVTFKKGLKGRTYISVLPANLEAAE</sequence>
<organism>
    <name type="scientific">Paracoccus denitrificans (strain Pd 1222)</name>
    <dbReference type="NCBI Taxonomy" id="318586"/>
    <lineage>
        <taxon>Bacteria</taxon>
        <taxon>Pseudomonadati</taxon>
        <taxon>Pseudomonadota</taxon>
        <taxon>Alphaproteobacteria</taxon>
        <taxon>Rhodobacterales</taxon>
        <taxon>Paracoccaceae</taxon>
        <taxon>Paracoccus</taxon>
    </lineage>
</organism>
<evidence type="ECO:0000255" key="1">
    <source>
        <dbReference type="HAMAP-Rule" id="MF_00539"/>
    </source>
</evidence>
<evidence type="ECO:0000305" key="2"/>
<gene>
    <name evidence="1" type="primary">rpmA</name>
    <name type="ordered locus">Pden_4102</name>
</gene>
<name>RL27_PARDP</name>
<accession>A1B9H4</accession>